<keyword id="KW-0007">Acetylation</keyword>
<keyword id="KW-0106">Calcium</keyword>
<keyword id="KW-0148">Chlorophyll</keyword>
<keyword id="KW-0150">Chloroplast</keyword>
<keyword id="KW-0157">Chromophore</keyword>
<keyword id="KW-0249">Electron transport</keyword>
<keyword id="KW-0359">Herbicide resistance</keyword>
<keyword id="KW-0408">Iron</keyword>
<keyword id="KW-0460">Magnesium</keyword>
<keyword id="KW-0464">Manganese</keyword>
<keyword id="KW-0472">Membrane</keyword>
<keyword id="KW-0479">Metal-binding</keyword>
<keyword id="KW-0560">Oxidoreductase</keyword>
<keyword id="KW-0597">Phosphoprotein</keyword>
<keyword id="KW-0602">Photosynthesis</keyword>
<keyword id="KW-0604">Photosystem II</keyword>
<keyword id="KW-0934">Plastid</keyword>
<keyword id="KW-0793">Thylakoid</keyword>
<keyword id="KW-0812">Transmembrane</keyword>
<keyword id="KW-1133">Transmembrane helix</keyword>
<keyword id="KW-0813">Transport</keyword>
<name>PSBA_JASNU</name>
<sequence length="353" mass="38951">MTAILERRESESLWGRFCNWITSTENRLYIGWFGVLMIPTLLTATSVFIIAFIAAPPVDIDGIREPVSGSLLYGNNIISGAIIPTSAAIGLHFYPIWEAASVDEWLYNGGPYELIVLHFLLGVACYMGREWELSFRLGMRPWIAVAYSAPVAAATAVFLIYPIGQGSFSDGMPLGISGTFNFMIVFQAEHNILMHPFHMLGVAGVFGGSLFSAMHGSLVTSSLIRETTENESANEGYRFGQEEETYNIVAAHGYFGRLIFQYASFNNSRSLHFFLAAWPVVGIWFTALGISTMAFNLNGFNFNQSVVDSQGRVINTWADIINRANLGMEVMHERNAHNFPLDLAAIEAPSTNG</sequence>
<gene>
    <name evidence="1" type="primary">psbA</name>
    <name type="ORF">JNC0005</name>
</gene>
<evidence type="ECO:0000255" key="1">
    <source>
        <dbReference type="HAMAP-Rule" id="MF_01379"/>
    </source>
</evidence>
<reference key="1">
    <citation type="journal article" date="2007" name="Mol. Biol. Evol.">
        <title>Gene relocations within chloroplast genomes of Jasminum and Menodora (Oleaceae) are due to multiple, overlapping inversions.</title>
        <authorList>
            <person name="Lee H.-L."/>
            <person name="Jansen R.K."/>
            <person name="Chumley T.W."/>
            <person name="Kim K.-J."/>
        </authorList>
    </citation>
    <scope>NUCLEOTIDE SEQUENCE [LARGE SCALE GENOMIC DNA]</scope>
</reference>
<feature type="initiator methionine" description="Removed" evidence="1">
    <location>
        <position position="1"/>
    </location>
</feature>
<feature type="chain" id="PRO_0000340005" description="Photosystem II protein D1" evidence="1">
    <location>
        <begin position="2"/>
        <end position="344"/>
    </location>
</feature>
<feature type="propeptide" id="PRO_0000340006" evidence="1">
    <location>
        <begin position="345"/>
        <end position="353"/>
    </location>
</feature>
<feature type="transmembrane region" description="Helical" evidence="1">
    <location>
        <begin position="29"/>
        <end position="46"/>
    </location>
</feature>
<feature type="transmembrane region" description="Helical" evidence="1">
    <location>
        <begin position="118"/>
        <end position="133"/>
    </location>
</feature>
<feature type="transmembrane region" description="Helical" evidence="1">
    <location>
        <begin position="142"/>
        <end position="156"/>
    </location>
</feature>
<feature type="transmembrane region" description="Helical" evidence="1">
    <location>
        <begin position="197"/>
        <end position="218"/>
    </location>
</feature>
<feature type="transmembrane region" description="Helical" evidence="1">
    <location>
        <begin position="274"/>
        <end position="288"/>
    </location>
</feature>
<feature type="binding site" description="axial binding residue" evidence="1">
    <location>
        <position position="118"/>
    </location>
    <ligand>
        <name>chlorophyll a</name>
        <dbReference type="ChEBI" id="CHEBI:58416"/>
        <label>ChlzD1</label>
    </ligand>
    <ligandPart>
        <name>Mg</name>
        <dbReference type="ChEBI" id="CHEBI:25107"/>
    </ligandPart>
</feature>
<feature type="binding site" evidence="1">
    <location>
        <position position="126"/>
    </location>
    <ligand>
        <name>pheophytin a</name>
        <dbReference type="ChEBI" id="CHEBI:136840"/>
        <label>D1</label>
    </ligand>
</feature>
<feature type="binding site" evidence="1">
    <location>
        <position position="170"/>
    </location>
    <ligand>
        <name>[CaMn4O5] cluster</name>
        <dbReference type="ChEBI" id="CHEBI:189552"/>
    </ligand>
</feature>
<feature type="binding site" evidence="1">
    <location>
        <position position="189"/>
    </location>
    <ligand>
        <name>[CaMn4O5] cluster</name>
        <dbReference type="ChEBI" id="CHEBI:189552"/>
    </ligand>
</feature>
<feature type="binding site" description="axial binding residue" evidence="1">
    <location>
        <position position="198"/>
    </location>
    <ligand>
        <name>chlorophyll a</name>
        <dbReference type="ChEBI" id="CHEBI:58416"/>
        <label>PD1</label>
    </ligand>
    <ligandPart>
        <name>Mg</name>
        <dbReference type="ChEBI" id="CHEBI:25107"/>
    </ligandPart>
</feature>
<feature type="binding site" evidence="1">
    <location>
        <position position="215"/>
    </location>
    <ligand>
        <name>a quinone</name>
        <dbReference type="ChEBI" id="CHEBI:132124"/>
        <label>B</label>
    </ligand>
</feature>
<feature type="binding site" evidence="1">
    <location>
        <position position="215"/>
    </location>
    <ligand>
        <name>Fe cation</name>
        <dbReference type="ChEBI" id="CHEBI:24875"/>
        <note>ligand shared with heterodimeric partner</note>
    </ligand>
</feature>
<feature type="binding site" evidence="1">
    <location>
        <begin position="264"/>
        <end position="265"/>
    </location>
    <ligand>
        <name>a quinone</name>
        <dbReference type="ChEBI" id="CHEBI:132124"/>
        <label>B</label>
    </ligand>
</feature>
<feature type="binding site" evidence="1">
    <location>
        <position position="272"/>
    </location>
    <ligand>
        <name>Fe cation</name>
        <dbReference type="ChEBI" id="CHEBI:24875"/>
        <note>ligand shared with heterodimeric partner</note>
    </ligand>
</feature>
<feature type="binding site" evidence="1">
    <location>
        <position position="332"/>
    </location>
    <ligand>
        <name>[CaMn4O5] cluster</name>
        <dbReference type="ChEBI" id="CHEBI:189552"/>
    </ligand>
</feature>
<feature type="binding site" evidence="1">
    <location>
        <position position="333"/>
    </location>
    <ligand>
        <name>[CaMn4O5] cluster</name>
        <dbReference type="ChEBI" id="CHEBI:189552"/>
    </ligand>
</feature>
<feature type="binding site" evidence="1">
    <location>
        <position position="342"/>
    </location>
    <ligand>
        <name>[CaMn4O5] cluster</name>
        <dbReference type="ChEBI" id="CHEBI:189552"/>
    </ligand>
</feature>
<feature type="binding site" evidence="1">
    <location>
        <position position="344"/>
    </location>
    <ligand>
        <name>[CaMn4O5] cluster</name>
        <dbReference type="ChEBI" id="CHEBI:189552"/>
    </ligand>
</feature>
<feature type="site" description="Tyrosine radical intermediate" evidence="1">
    <location>
        <position position="161"/>
    </location>
</feature>
<feature type="site" description="Stabilizes free radical intermediate" evidence="1">
    <location>
        <position position="190"/>
    </location>
</feature>
<feature type="site" description="Cleavage; by CTPA" evidence="1">
    <location>
        <begin position="344"/>
        <end position="345"/>
    </location>
</feature>
<feature type="modified residue" description="N-acetylthreonine" evidence="1">
    <location>
        <position position="2"/>
    </location>
</feature>
<feature type="modified residue" description="Phosphothreonine" evidence="1">
    <location>
        <position position="2"/>
    </location>
</feature>
<organism>
    <name type="scientific">Jasminum nudiflorum</name>
    <name type="common">Winter jasmine</name>
    <dbReference type="NCBI Taxonomy" id="126431"/>
    <lineage>
        <taxon>Eukaryota</taxon>
        <taxon>Viridiplantae</taxon>
        <taxon>Streptophyta</taxon>
        <taxon>Embryophyta</taxon>
        <taxon>Tracheophyta</taxon>
        <taxon>Spermatophyta</taxon>
        <taxon>Magnoliopsida</taxon>
        <taxon>eudicotyledons</taxon>
        <taxon>Gunneridae</taxon>
        <taxon>Pentapetalae</taxon>
        <taxon>asterids</taxon>
        <taxon>lamiids</taxon>
        <taxon>Lamiales</taxon>
        <taxon>Oleaceae</taxon>
        <taxon>Jasmineae</taxon>
        <taxon>Jasminum</taxon>
    </lineage>
</organism>
<proteinExistence type="inferred from homology"/>
<comment type="function">
    <text evidence="1">Photosystem II (PSII) is a light-driven water:plastoquinone oxidoreductase that uses light energy to abstract electrons from H(2)O, generating O(2) and a proton gradient subsequently used for ATP formation. It consists of a core antenna complex that captures photons, and an electron transfer chain that converts photonic excitation into a charge separation. The D1/D2 (PsbA/PsbD) reaction center heterodimer binds P680, the primary electron donor of PSII as well as several subsequent electron acceptors.</text>
</comment>
<comment type="catalytic activity">
    <reaction evidence="1">
        <text>2 a plastoquinone + 4 hnu + 2 H2O = 2 a plastoquinol + O2</text>
        <dbReference type="Rhea" id="RHEA:36359"/>
        <dbReference type="Rhea" id="RHEA-COMP:9561"/>
        <dbReference type="Rhea" id="RHEA-COMP:9562"/>
        <dbReference type="ChEBI" id="CHEBI:15377"/>
        <dbReference type="ChEBI" id="CHEBI:15379"/>
        <dbReference type="ChEBI" id="CHEBI:17757"/>
        <dbReference type="ChEBI" id="CHEBI:30212"/>
        <dbReference type="ChEBI" id="CHEBI:62192"/>
        <dbReference type="EC" id="1.10.3.9"/>
    </reaction>
</comment>
<comment type="cofactor">
    <text evidence="1">The D1/D2 heterodimer binds P680, chlorophylls that are the primary electron donor of PSII, and subsequent electron acceptors. It shares a non-heme iron and each subunit binds pheophytin, quinone, additional chlorophylls, carotenoids and lipids. D1 provides most of the ligands for the Mn4-Ca-O5 cluster of the oxygen-evolving complex (OEC). There is also a Cl(-1) ion associated with D1 and D2, which is required for oxygen evolution. The PSII complex binds additional chlorophylls, carotenoids and specific lipids.</text>
</comment>
<comment type="subunit">
    <text evidence="1">PSII is composed of 1 copy each of membrane proteins PsbA, PsbB, PsbC, PsbD, PsbE, PsbF, PsbH, PsbI, PsbJ, PsbK, PsbL, PsbM, PsbT, PsbX, PsbY, PsbZ, Psb30/Ycf12, at least 3 peripheral proteins of the oxygen-evolving complex and a large number of cofactors. It forms dimeric complexes.</text>
</comment>
<comment type="subcellular location">
    <subcellularLocation>
        <location evidence="1">Plastid</location>
        <location evidence="1">Chloroplast thylakoid membrane</location>
        <topology evidence="1">Multi-pass membrane protein</topology>
    </subcellularLocation>
</comment>
<comment type="PTM">
    <text evidence="1">Tyr-161 forms a radical intermediate that is referred to as redox-active TyrZ, YZ or Y-Z.</text>
</comment>
<comment type="PTM">
    <text evidence="1">C-terminally processed by CTPA; processing is essential to allow assembly of the oxygen-evolving complex and thus photosynthetic growth.</text>
</comment>
<comment type="miscellaneous">
    <text evidence="1">2 of the reaction center chlorophylls (ChlD1 and ChlD2) are entirely coordinated by water.</text>
</comment>
<comment type="miscellaneous">
    <text evidence="1">Herbicides such as atrazine, BNT, diuron or ioxynil bind in the Q(B) binding site and block subsequent electron transfer.</text>
</comment>
<comment type="similarity">
    <text evidence="1">Belongs to the reaction center PufL/M/PsbA/D family.</text>
</comment>
<dbReference type="EC" id="1.10.3.9" evidence="1"/>
<dbReference type="EMBL" id="DQ673255">
    <property type="protein sequence ID" value="ABG74608.1"/>
    <property type="molecule type" value="Genomic_DNA"/>
</dbReference>
<dbReference type="RefSeq" id="YP_778470.1">
    <property type="nucleotide sequence ID" value="NC_008407.1"/>
</dbReference>
<dbReference type="SMR" id="Q06RF1"/>
<dbReference type="GeneID" id="4319752"/>
<dbReference type="GO" id="GO:0009535">
    <property type="term" value="C:chloroplast thylakoid membrane"/>
    <property type="evidence" value="ECO:0007669"/>
    <property type="project" value="UniProtKB-SubCell"/>
</dbReference>
<dbReference type="GO" id="GO:0009523">
    <property type="term" value="C:photosystem II"/>
    <property type="evidence" value="ECO:0007669"/>
    <property type="project" value="UniProtKB-KW"/>
</dbReference>
<dbReference type="GO" id="GO:0016168">
    <property type="term" value="F:chlorophyll binding"/>
    <property type="evidence" value="ECO:0007669"/>
    <property type="project" value="UniProtKB-UniRule"/>
</dbReference>
<dbReference type="GO" id="GO:0045156">
    <property type="term" value="F:electron transporter, transferring electrons within the cyclic electron transport pathway of photosynthesis activity"/>
    <property type="evidence" value="ECO:0007669"/>
    <property type="project" value="InterPro"/>
</dbReference>
<dbReference type="GO" id="GO:0005506">
    <property type="term" value="F:iron ion binding"/>
    <property type="evidence" value="ECO:0007669"/>
    <property type="project" value="UniProtKB-UniRule"/>
</dbReference>
<dbReference type="GO" id="GO:0016682">
    <property type="term" value="F:oxidoreductase activity, acting on diphenols and related substances as donors, oxygen as acceptor"/>
    <property type="evidence" value="ECO:0007669"/>
    <property type="project" value="UniProtKB-UniRule"/>
</dbReference>
<dbReference type="GO" id="GO:0010242">
    <property type="term" value="F:oxygen evolving activity"/>
    <property type="evidence" value="ECO:0007669"/>
    <property type="project" value="UniProtKB-EC"/>
</dbReference>
<dbReference type="GO" id="GO:0009772">
    <property type="term" value="P:photosynthetic electron transport in photosystem II"/>
    <property type="evidence" value="ECO:0007669"/>
    <property type="project" value="InterPro"/>
</dbReference>
<dbReference type="GO" id="GO:0009635">
    <property type="term" value="P:response to herbicide"/>
    <property type="evidence" value="ECO:0007669"/>
    <property type="project" value="UniProtKB-KW"/>
</dbReference>
<dbReference type="CDD" id="cd09289">
    <property type="entry name" value="Photosystem-II_D1"/>
    <property type="match status" value="1"/>
</dbReference>
<dbReference type="FunFam" id="1.20.85.10:FF:000002">
    <property type="entry name" value="Photosystem II protein D1"/>
    <property type="match status" value="1"/>
</dbReference>
<dbReference type="Gene3D" id="1.20.85.10">
    <property type="entry name" value="Photosystem II protein D1-like"/>
    <property type="match status" value="1"/>
</dbReference>
<dbReference type="HAMAP" id="MF_01379">
    <property type="entry name" value="PSII_PsbA_D1"/>
    <property type="match status" value="1"/>
</dbReference>
<dbReference type="InterPro" id="IPR055266">
    <property type="entry name" value="D1/D2"/>
</dbReference>
<dbReference type="InterPro" id="IPR036854">
    <property type="entry name" value="Photo_II_D1/D2_sf"/>
</dbReference>
<dbReference type="InterPro" id="IPR000484">
    <property type="entry name" value="Photo_RC_L/M"/>
</dbReference>
<dbReference type="InterPro" id="IPR055265">
    <property type="entry name" value="Photo_RC_L/M_CS"/>
</dbReference>
<dbReference type="InterPro" id="IPR005867">
    <property type="entry name" value="PSII_D1"/>
</dbReference>
<dbReference type="NCBIfam" id="TIGR01151">
    <property type="entry name" value="psbA"/>
    <property type="match status" value="1"/>
</dbReference>
<dbReference type="PANTHER" id="PTHR33149:SF12">
    <property type="entry name" value="PHOTOSYSTEM II D2 PROTEIN"/>
    <property type="match status" value="1"/>
</dbReference>
<dbReference type="PANTHER" id="PTHR33149">
    <property type="entry name" value="PHOTOSYSTEM II PROTEIN D1"/>
    <property type="match status" value="1"/>
</dbReference>
<dbReference type="Pfam" id="PF00124">
    <property type="entry name" value="Photo_RC"/>
    <property type="match status" value="1"/>
</dbReference>
<dbReference type="PRINTS" id="PR00256">
    <property type="entry name" value="REACTNCENTRE"/>
</dbReference>
<dbReference type="SUPFAM" id="SSF81483">
    <property type="entry name" value="Bacterial photosystem II reaction centre, L and M subunits"/>
    <property type="match status" value="1"/>
</dbReference>
<dbReference type="PROSITE" id="PS00244">
    <property type="entry name" value="REACTION_CENTER"/>
    <property type="match status" value="1"/>
</dbReference>
<accession>Q06RF1</accession>
<geneLocation type="chloroplast"/>
<protein>
    <recommendedName>
        <fullName evidence="1">Photosystem II protein D1</fullName>
        <shortName evidence="1">PSII D1 protein</shortName>
        <ecNumber evidence="1">1.10.3.9</ecNumber>
    </recommendedName>
    <alternativeName>
        <fullName evidence="1">Photosystem II Q(B) protein</fullName>
    </alternativeName>
</protein>